<protein>
    <recommendedName>
        <fullName evidence="1">Protein GrpE</fullName>
    </recommendedName>
    <alternativeName>
        <fullName evidence="1">HSP-70 cofactor</fullName>
    </alternativeName>
</protein>
<name>GRPE_ENT38</name>
<comment type="function">
    <text evidence="1">Participates actively in the response to hyperosmotic and heat shock by preventing the aggregation of stress-denatured proteins, in association with DnaK and GrpE. It is the nucleotide exchange factor for DnaK and may function as a thermosensor. Unfolded proteins bind initially to DnaJ; upon interaction with the DnaJ-bound protein, DnaK hydrolyzes its bound ATP, resulting in the formation of a stable complex. GrpE releases ADP from DnaK; ATP binding to DnaK triggers the release of the substrate protein, thus completing the reaction cycle. Several rounds of ATP-dependent interactions between DnaJ, DnaK and GrpE are required for fully efficient folding.</text>
</comment>
<comment type="subunit">
    <text evidence="1">Homodimer.</text>
</comment>
<comment type="subcellular location">
    <subcellularLocation>
        <location evidence="1">Cytoplasm</location>
    </subcellularLocation>
</comment>
<comment type="similarity">
    <text evidence="1">Belongs to the GrpE family.</text>
</comment>
<organism>
    <name type="scientific">Enterobacter sp. (strain 638)</name>
    <dbReference type="NCBI Taxonomy" id="399742"/>
    <lineage>
        <taxon>Bacteria</taxon>
        <taxon>Pseudomonadati</taxon>
        <taxon>Pseudomonadota</taxon>
        <taxon>Gammaproteobacteria</taxon>
        <taxon>Enterobacterales</taxon>
        <taxon>Enterobacteriaceae</taxon>
        <taxon>Enterobacter</taxon>
    </lineage>
</organism>
<sequence>MSSKEQKTPEGQAPEEIITEQHEEVEAVEPDASAEQVDPRDEKIANLEAQLTEAQNREREGVLRVKAEMENLRRRTELDVEKAHKFALEKFVNELLPVIDSLDRALEVADKANPDMTAMVEGLELTLKSMLDVVRKFGVEVVAETNVALDPNVHQAIAMVESEDVAAGNVLAVMQKGYTLNGRTIRAAMVTVAKAKG</sequence>
<keyword id="KW-0143">Chaperone</keyword>
<keyword id="KW-0963">Cytoplasm</keyword>
<keyword id="KW-0346">Stress response</keyword>
<proteinExistence type="inferred from homology"/>
<reference key="1">
    <citation type="journal article" date="2010" name="PLoS Genet.">
        <title>Genome sequence of the plant growth promoting endophytic bacterium Enterobacter sp. 638.</title>
        <authorList>
            <person name="Taghavi S."/>
            <person name="van der Lelie D."/>
            <person name="Hoffman A."/>
            <person name="Zhang Y.B."/>
            <person name="Walla M.D."/>
            <person name="Vangronsveld J."/>
            <person name="Newman L."/>
            <person name="Monchy S."/>
        </authorList>
    </citation>
    <scope>NUCLEOTIDE SEQUENCE [LARGE SCALE GENOMIC DNA]</scope>
    <source>
        <strain>638</strain>
    </source>
</reference>
<accession>A4WDH8</accession>
<evidence type="ECO:0000255" key="1">
    <source>
        <dbReference type="HAMAP-Rule" id="MF_01151"/>
    </source>
</evidence>
<evidence type="ECO:0000256" key="2">
    <source>
        <dbReference type="SAM" id="MobiDB-lite"/>
    </source>
</evidence>
<gene>
    <name evidence="1" type="primary">grpE</name>
    <name type="ordered locus">Ent638_3094</name>
</gene>
<feature type="chain" id="PRO_1000065518" description="Protein GrpE">
    <location>
        <begin position="1"/>
        <end position="197"/>
    </location>
</feature>
<feature type="region of interest" description="Disordered" evidence="2">
    <location>
        <begin position="1"/>
        <end position="41"/>
    </location>
</feature>
<dbReference type="EMBL" id="CP000653">
    <property type="protein sequence ID" value="ABP61758.1"/>
    <property type="molecule type" value="Genomic_DNA"/>
</dbReference>
<dbReference type="RefSeq" id="WP_015960088.1">
    <property type="nucleotide sequence ID" value="NC_009436.1"/>
</dbReference>
<dbReference type="SMR" id="A4WDH8"/>
<dbReference type="STRING" id="399742.Ent638_3094"/>
<dbReference type="KEGG" id="ent:Ent638_3094"/>
<dbReference type="eggNOG" id="COG0576">
    <property type="taxonomic scope" value="Bacteria"/>
</dbReference>
<dbReference type="HOGENOM" id="CLU_057217_6_0_6"/>
<dbReference type="OrthoDB" id="9789811at2"/>
<dbReference type="Proteomes" id="UP000000230">
    <property type="component" value="Chromosome"/>
</dbReference>
<dbReference type="GO" id="GO:0005829">
    <property type="term" value="C:cytosol"/>
    <property type="evidence" value="ECO:0007669"/>
    <property type="project" value="TreeGrafter"/>
</dbReference>
<dbReference type="GO" id="GO:0000774">
    <property type="term" value="F:adenyl-nucleotide exchange factor activity"/>
    <property type="evidence" value="ECO:0007669"/>
    <property type="project" value="InterPro"/>
</dbReference>
<dbReference type="GO" id="GO:0042803">
    <property type="term" value="F:protein homodimerization activity"/>
    <property type="evidence" value="ECO:0007669"/>
    <property type="project" value="InterPro"/>
</dbReference>
<dbReference type="GO" id="GO:0051087">
    <property type="term" value="F:protein-folding chaperone binding"/>
    <property type="evidence" value="ECO:0007669"/>
    <property type="project" value="InterPro"/>
</dbReference>
<dbReference type="GO" id="GO:0051082">
    <property type="term" value="F:unfolded protein binding"/>
    <property type="evidence" value="ECO:0007669"/>
    <property type="project" value="TreeGrafter"/>
</dbReference>
<dbReference type="GO" id="GO:0006457">
    <property type="term" value="P:protein folding"/>
    <property type="evidence" value="ECO:0007669"/>
    <property type="project" value="InterPro"/>
</dbReference>
<dbReference type="CDD" id="cd00446">
    <property type="entry name" value="GrpE"/>
    <property type="match status" value="1"/>
</dbReference>
<dbReference type="FunFam" id="2.30.22.10:FF:000001">
    <property type="entry name" value="Protein GrpE"/>
    <property type="match status" value="1"/>
</dbReference>
<dbReference type="FunFam" id="3.90.20.20:FF:000001">
    <property type="entry name" value="Protein GrpE"/>
    <property type="match status" value="1"/>
</dbReference>
<dbReference type="Gene3D" id="3.90.20.20">
    <property type="match status" value="1"/>
</dbReference>
<dbReference type="Gene3D" id="2.30.22.10">
    <property type="entry name" value="Head domain of nucleotide exchange factor GrpE"/>
    <property type="match status" value="1"/>
</dbReference>
<dbReference type="HAMAP" id="MF_01151">
    <property type="entry name" value="GrpE"/>
    <property type="match status" value="1"/>
</dbReference>
<dbReference type="InterPro" id="IPR000740">
    <property type="entry name" value="GrpE"/>
</dbReference>
<dbReference type="InterPro" id="IPR013805">
    <property type="entry name" value="GrpE_coiled_coil"/>
</dbReference>
<dbReference type="InterPro" id="IPR009012">
    <property type="entry name" value="GrpE_head"/>
</dbReference>
<dbReference type="NCBIfam" id="NF007655">
    <property type="entry name" value="PRK10325.1"/>
    <property type="match status" value="1"/>
</dbReference>
<dbReference type="NCBIfam" id="NF010738">
    <property type="entry name" value="PRK14140.1"/>
    <property type="match status" value="1"/>
</dbReference>
<dbReference type="NCBIfam" id="NF010748">
    <property type="entry name" value="PRK14150.1"/>
    <property type="match status" value="1"/>
</dbReference>
<dbReference type="PANTHER" id="PTHR21237">
    <property type="entry name" value="GRPE PROTEIN"/>
    <property type="match status" value="1"/>
</dbReference>
<dbReference type="PANTHER" id="PTHR21237:SF23">
    <property type="entry name" value="GRPE PROTEIN HOMOLOG, MITOCHONDRIAL"/>
    <property type="match status" value="1"/>
</dbReference>
<dbReference type="Pfam" id="PF01025">
    <property type="entry name" value="GrpE"/>
    <property type="match status" value="1"/>
</dbReference>
<dbReference type="PRINTS" id="PR00773">
    <property type="entry name" value="GRPEPROTEIN"/>
</dbReference>
<dbReference type="SUPFAM" id="SSF58014">
    <property type="entry name" value="Coiled-coil domain of nucleotide exchange factor GrpE"/>
    <property type="match status" value="1"/>
</dbReference>
<dbReference type="SUPFAM" id="SSF51064">
    <property type="entry name" value="Head domain of nucleotide exchange factor GrpE"/>
    <property type="match status" value="1"/>
</dbReference>
<dbReference type="PROSITE" id="PS01071">
    <property type="entry name" value="GRPE"/>
    <property type="match status" value="1"/>
</dbReference>